<proteinExistence type="inferred from homology"/>
<evidence type="ECO:0000255" key="1">
    <source>
        <dbReference type="HAMAP-Rule" id="MF_01363"/>
    </source>
</evidence>
<evidence type="ECO:0000256" key="2">
    <source>
        <dbReference type="SAM" id="MobiDB-lite"/>
    </source>
</evidence>
<evidence type="ECO:0000305" key="3"/>
<organism>
    <name type="scientific">Staphylococcus aureus (strain MRSA252)</name>
    <dbReference type="NCBI Taxonomy" id="282458"/>
    <lineage>
        <taxon>Bacteria</taxon>
        <taxon>Bacillati</taxon>
        <taxon>Bacillota</taxon>
        <taxon>Bacilli</taxon>
        <taxon>Bacillales</taxon>
        <taxon>Staphylococcaceae</taxon>
        <taxon>Staphylococcus</taxon>
    </lineage>
</organism>
<feature type="chain" id="PRO_0000224934" description="Large ribosomal subunit protein bL21">
    <location>
        <begin position="1"/>
        <end position="102"/>
    </location>
</feature>
<feature type="region of interest" description="Disordered" evidence="2">
    <location>
        <begin position="80"/>
        <end position="102"/>
    </location>
</feature>
<feature type="compositionally biased region" description="Basic residues" evidence="2">
    <location>
        <begin position="80"/>
        <end position="91"/>
    </location>
</feature>
<name>RL21_STAAR</name>
<keyword id="KW-0687">Ribonucleoprotein</keyword>
<keyword id="KW-0689">Ribosomal protein</keyword>
<keyword id="KW-0694">RNA-binding</keyword>
<keyword id="KW-0699">rRNA-binding</keyword>
<reference key="1">
    <citation type="journal article" date="2004" name="Proc. Natl. Acad. Sci. U.S.A.">
        <title>Complete genomes of two clinical Staphylococcus aureus strains: evidence for the rapid evolution of virulence and drug resistance.</title>
        <authorList>
            <person name="Holden M.T.G."/>
            <person name="Feil E.J."/>
            <person name="Lindsay J.A."/>
            <person name="Peacock S.J."/>
            <person name="Day N.P.J."/>
            <person name="Enright M.C."/>
            <person name="Foster T.J."/>
            <person name="Moore C.E."/>
            <person name="Hurst L."/>
            <person name="Atkin R."/>
            <person name="Barron A."/>
            <person name="Bason N."/>
            <person name="Bentley S.D."/>
            <person name="Chillingworth C."/>
            <person name="Chillingworth T."/>
            <person name="Churcher C."/>
            <person name="Clark L."/>
            <person name="Corton C."/>
            <person name="Cronin A."/>
            <person name="Doggett J."/>
            <person name="Dowd L."/>
            <person name="Feltwell T."/>
            <person name="Hance Z."/>
            <person name="Harris B."/>
            <person name="Hauser H."/>
            <person name="Holroyd S."/>
            <person name="Jagels K."/>
            <person name="James K.D."/>
            <person name="Lennard N."/>
            <person name="Line A."/>
            <person name="Mayes R."/>
            <person name="Moule S."/>
            <person name="Mungall K."/>
            <person name="Ormond D."/>
            <person name="Quail M.A."/>
            <person name="Rabbinowitsch E."/>
            <person name="Rutherford K.M."/>
            <person name="Sanders M."/>
            <person name="Sharp S."/>
            <person name="Simmonds M."/>
            <person name="Stevens K."/>
            <person name="Whitehead S."/>
            <person name="Barrell B.G."/>
            <person name="Spratt B.G."/>
            <person name="Parkhill J."/>
        </authorList>
    </citation>
    <scope>NUCLEOTIDE SEQUENCE [LARGE SCALE GENOMIC DNA]</scope>
    <source>
        <strain>MRSA252</strain>
    </source>
</reference>
<protein>
    <recommendedName>
        <fullName evidence="1">Large ribosomal subunit protein bL21</fullName>
    </recommendedName>
    <alternativeName>
        <fullName evidence="3">50S ribosomal protein L21</fullName>
    </alternativeName>
</protein>
<comment type="function">
    <text evidence="1">This protein binds to 23S rRNA in the presence of protein L20.</text>
</comment>
<comment type="subunit">
    <text evidence="1">Part of the 50S ribosomal subunit. Contacts protein L20.</text>
</comment>
<comment type="similarity">
    <text evidence="1">Belongs to the bacterial ribosomal protein bL21 family.</text>
</comment>
<sequence length="102" mass="11333">MFAIIETGGKQIKVEEGQEIFVEKLDVNEGDTFTFDKVLFVGGDSVKVGAPTVEGATVTATVNKQGRGKKITVFTYKRRKNSKRKKGHRQPYTKLTIDKINA</sequence>
<dbReference type="EMBL" id="BX571856">
    <property type="protein sequence ID" value="CAG40718.1"/>
    <property type="molecule type" value="Genomic_DNA"/>
</dbReference>
<dbReference type="RefSeq" id="WP_000457386.1">
    <property type="nucleotide sequence ID" value="NC_002952.2"/>
</dbReference>
<dbReference type="SMR" id="Q6GG57"/>
<dbReference type="GeneID" id="66839833"/>
<dbReference type="KEGG" id="sar:SAR1727"/>
<dbReference type="HOGENOM" id="CLU_061463_3_2_9"/>
<dbReference type="Proteomes" id="UP000000596">
    <property type="component" value="Chromosome"/>
</dbReference>
<dbReference type="GO" id="GO:0005737">
    <property type="term" value="C:cytoplasm"/>
    <property type="evidence" value="ECO:0007669"/>
    <property type="project" value="UniProtKB-ARBA"/>
</dbReference>
<dbReference type="GO" id="GO:1990904">
    <property type="term" value="C:ribonucleoprotein complex"/>
    <property type="evidence" value="ECO:0007669"/>
    <property type="project" value="UniProtKB-KW"/>
</dbReference>
<dbReference type="GO" id="GO:0005840">
    <property type="term" value="C:ribosome"/>
    <property type="evidence" value="ECO:0007669"/>
    <property type="project" value="UniProtKB-KW"/>
</dbReference>
<dbReference type="GO" id="GO:0019843">
    <property type="term" value="F:rRNA binding"/>
    <property type="evidence" value="ECO:0007669"/>
    <property type="project" value="UniProtKB-UniRule"/>
</dbReference>
<dbReference type="GO" id="GO:0003735">
    <property type="term" value="F:structural constituent of ribosome"/>
    <property type="evidence" value="ECO:0007669"/>
    <property type="project" value="InterPro"/>
</dbReference>
<dbReference type="GO" id="GO:0006412">
    <property type="term" value="P:translation"/>
    <property type="evidence" value="ECO:0007669"/>
    <property type="project" value="UniProtKB-UniRule"/>
</dbReference>
<dbReference type="HAMAP" id="MF_01363">
    <property type="entry name" value="Ribosomal_bL21"/>
    <property type="match status" value="1"/>
</dbReference>
<dbReference type="InterPro" id="IPR028909">
    <property type="entry name" value="bL21-like"/>
</dbReference>
<dbReference type="InterPro" id="IPR036164">
    <property type="entry name" value="bL21-like_sf"/>
</dbReference>
<dbReference type="InterPro" id="IPR001787">
    <property type="entry name" value="Ribosomal_bL21"/>
</dbReference>
<dbReference type="NCBIfam" id="TIGR00061">
    <property type="entry name" value="L21"/>
    <property type="match status" value="1"/>
</dbReference>
<dbReference type="PANTHER" id="PTHR21349">
    <property type="entry name" value="50S RIBOSOMAL PROTEIN L21"/>
    <property type="match status" value="1"/>
</dbReference>
<dbReference type="PANTHER" id="PTHR21349:SF0">
    <property type="entry name" value="LARGE RIBOSOMAL SUBUNIT PROTEIN BL21M"/>
    <property type="match status" value="1"/>
</dbReference>
<dbReference type="Pfam" id="PF00829">
    <property type="entry name" value="Ribosomal_L21p"/>
    <property type="match status" value="1"/>
</dbReference>
<dbReference type="SUPFAM" id="SSF141091">
    <property type="entry name" value="L21p-like"/>
    <property type="match status" value="1"/>
</dbReference>
<accession>Q6GG57</accession>
<gene>
    <name evidence="1" type="primary">rplU</name>
    <name type="ordered locus">SAR1727</name>
</gene>